<evidence type="ECO:0000255" key="1">
    <source>
        <dbReference type="HAMAP-Rule" id="MF_00218"/>
    </source>
</evidence>
<name>DCUP_CORGB</name>
<protein>
    <recommendedName>
        <fullName evidence="1">Uroporphyrinogen decarboxylase</fullName>
        <shortName evidence="1">UPD</shortName>
        <shortName evidence="1">URO-D</shortName>
        <ecNumber evidence="1">4.1.1.37</ecNumber>
    </recommendedName>
</protein>
<dbReference type="EC" id="4.1.1.37" evidence="1"/>
<dbReference type="EMBL" id="AP009044">
    <property type="protein sequence ID" value="BAF53473.1"/>
    <property type="molecule type" value="Genomic_DNA"/>
</dbReference>
<dbReference type="RefSeq" id="WP_011896700.1">
    <property type="nucleotide sequence ID" value="NC_009342.1"/>
</dbReference>
<dbReference type="SMR" id="A4QB76"/>
<dbReference type="KEGG" id="cgt:cgR_0505"/>
<dbReference type="HOGENOM" id="CLU_040933_0_1_11"/>
<dbReference type="PhylomeDB" id="A4QB76"/>
<dbReference type="UniPathway" id="UPA00251">
    <property type="reaction ID" value="UER00321"/>
</dbReference>
<dbReference type="Proteomes" id="UP000006698">
    <property type="component" value="Chromosome"/>
</dbReference>
<dbReference type="GO" id="GO:0005829">
    <property type="term" value="C:cytosol"/>
    <property type="evidence" value="ECO:0007669"/>
    <property type="project" value="TreeGrafter"/>
</dbReference>
<dbReference type="GO" id="GO:0004853">
    <property type="term" value="F:uroporphyrinogen decarboxylase activity"/>
    <property type="evidence" value="ECO:0007669"/>
    <property type="project" value="UniProtKB-UniRule"/>
</dbReference>
<dbReference type="GO" id="GO:0006782">
    <property type="term" value="P:protoporphyrinogen IX biosynthetic process"/>
    <property type="evidence" value="ECO:0007669"/>
    <property type="project" value="UniProtKB-UniRule"/>
</dbReference>
<dbReference type="CDD" id="cd00717">
    <property type="entry name" value="URO-D"/>
    <property type="match status" value="1"/>
</dbReference>
<dbReference type="Gene3D" id="3.20.20.210">
    <property type="match status" value="1"/>
</dbReference>
<dbReference type="HAMAP" id="MF_00218">
    <property type="entry name" value="URO_D"/>
    <property type="match status" value="1"/>
</dbReference>
<dbReference type="InterPro" id="IPR038071">
    <property type="entry name" value="UROD/MetE-like_sf"/>
</dbReference>
<dbReference type="InterPro" id="IPR006361">
    <property type="entry name" value="Uroporphyrinogen_deCO2ase_HemE"/>
</dbReference>
<dbReference type="InterPro" id="IPR000257">
    <property type="entry name" value="Uroporphyrinogen_deCOase"/>
</dbReference>
<dbReference type="NCBIfam" id="TIGR01464">
    <property type="entry name" value="hemE"/>
    <property type="match status" value="1"/>
</dbReference>
<dbReference type="PANTHER" id="PTHR21091">
    <property type="entry name" value="METHYLTETRAHYDROFOLATE:HOMOCYSTEINE METHYLTRANSFERASE RELATED"/>
    <property type="match status" value="1"/>
</dbReference>
<dbReference type="PANTHER" id="PTHR21091:SF169">
    <property type="entry name" value="UROPORPHYRINOGEN DECARBOXYLASE"/>
    <property type="match status" value="1"/>
</dbReference>
<dbReference type="Pfam" id="PF01208">
    <property type="entry name" value="URO-D"/>
    <property type="match status" value="1"/>
</dbReference>
<dbReference type="SUPFAM" id="SSF51726">
    <property type="entry name" value="UROD/MetE-like"/>
    <property type="match status" value="1"/>
</dbReference>
<dbReference type="PROSITE" id="PS00906">
    <property type="entry name" value="UROD_1"/>
    <property type="match status" value="1"/>
</dbReference>
<dbReference type="PROSITE" id="PS00907">
    <property type="entry name" value="UROD_2"/>
    <property type="match status" value="1"/>
</dbReference>
<proteinExistence type="inferred from homology"/>
<organism>
    <name type="scientific">Corynebacterium glutamicum (strain R)</name>
    <dbReference type="NCBI Taxonomy" id="340322"/>
    <lineage>
        <taxon>Bacteria</taxon>
        <taxon>Bacillati</taxon>
        <taxon>Actinomycetota</taxon>
        <taxon>Actinomycetes</taxon>
        <taxon>Mycobacteriales</taxon>
        <taxon>Corynebacteriaceae</taxon>
        <taxon>Corynebacterium</taxon>
    </lineage>
</organism>
<feature type="chain" id="PRO_1000023900" description="Uroporphyrinogen decarboxylase">
    <location>
        <begin position="1"/>
        <end position="358"/>
    </location>
</feature>
<feature type="binding site" evidence="1">
    <location>
        <begin position="36"/>
        <end position="40"/>
    </location>
    <ligand>
        <name>substrate</name>
    </ligand>
</feature>
<feature type="binding site" evidence="1">
    <location>
        <position position="85"/>
    </location>
    <ligand>
        <name>substrate</name>
    </ligand>
</feature>
<feature type="binding site" evidence="1">
    <location>
        <position position="160"/>
    </location>
    <ligand>
        <name>substrate</name>
    </ligand>
</feature>
<feature type="binding site" evidence="1">
    <location>
        <position position="215"/>
    </location>
    <ligand>
        <name>substrate</name>
    </ligand>
</feature>
<feature type="binding site" evidence="1">
    <location>
        <position position="338"/>
    </location>
    <ligand>
        <name>substrate</name>
    </ligand>
</feature>
<feature type="site" description="Transition state stabilizer" evidence="1">
    <location>
        <position position="85"/>
    </location>
</feature>
<accession>A4QB76</accession>
<sequence>MSALTIPAARRTLNNAPIIDAANGKTPTRTPVWFMRQAGRSLPEYKKVREGISMLDSCFMPELLAEITLQPVRRHDVDAAILFSDIVVPLRAAGVGVEIVAGRGPVLDAPVRSREDVLNLPILEGNVPEVEQGIGIILDELSDSQALIGFAGAPFTLASYLVEGGPSKNHEKTKAMMHGDPETWHALMARLVPTIVNSLKSQIDAGIDAMQLFDSWAGFLTERDYTEFVLPYSTEILEEVGKYQLPRIHFGVGTGELLGAMSKAGSEVMGVDWRVPLDKAAERIAAVSGPKVLQGNLDPALLFAGRAPLTKEIERIKAEAQTAIDAGHATGHIFNLGHGVLPNTVAEDITEAVSIIHS</sequence>
<gene>
    <name evidence="1" type="primary">hemE</name>
    <name type="ordered locus">cgR_0505</name>
</gene>
<keyword id="KW-0963">Cytoplasm</keyword>
<keyword id="KW-0210">Decarboxylase</keyword>
<keyword id="KW-0456">Lyase</keyword>
<keyword id="KW-0627">Porphyrin biosynthesis</keyword>
<comment type="function">
    <text evidence="1">Catalyzes the decarboxylation of four acetate groups of uroporphyrinogen-III to yield coproporphyrinogen-III.</text>
</comment>
<comment type="catalytic activity">
    <reaction evidence="1">
        <text>uroporphyrinogen III + 4 H(+) = coproporphyrinogen III + 4 CO2</text>
        <dbReference type="Rhea" id="RHEA:19865"/>
        <dbReference type="ChEBI" id="CHEBI:15378"/>
        <dbReference type="ChEBI" id="CHEBI:16526"/>
        <dbReference type="ChEBI" id="CHEBI:57308"/>
        <dbReference type="ChEBI" id="CHEBI:57309"/>
        <dbReference type="EC" id="4.1.1.37"/>
    </reaction>
</comment>
<comment type="pathway">
    <text evidence="1">Porphyrin-containing compound metabolism; protoporphyrin-IX biosynthesis; coproporphyrinogen-III from 5-aminolevulinate: step 4/4.</text>
</comment>
<comment type="subunit">
    <text evidence="1">Homodimer.</text>
</comment>
<comment type="subcellular location">
    <subcellularLocation>
        <location evidence="1">Cytoplasm</location>
    </subcellularLocation>
</comment>
<comment type="similarity">
    <text evidence="1">Belongs to the uroporphyrinogen decarboxylase family.</text>
</comment>
<reference key="1">
    <citation type="journal article" date="2007" name="Microbiology">
        <title>Comparative analysis of the Corynebacterium glutamicum group and complete genome sequence of strain R.</title>
        <authorList>
            <person name="Yukawa H."/>
            <person name="Omumasaba C.A."/>
            <person name="Nonaka H."/>
            <person name="Kos P."/>
            <person name="Okai N."/>
            <person name="Suzuki N."/>
            <person name="Suda M."/>
            <person name="Tsuge Y."/>
            <person name="Watanabe J."/>
            <person name="Ikeda Y."/>
            <person name="Vertes A.A."/>
            <person name="Inui M."/>
        </authorList>
    </citation>
    <scope>NUCLEOTIDE SEQUENCE [LARGE SCALE GENOMIC DNA]</scope>
    <source>
        <strain>R</strain>
    </source>
</reference>